<dbReference type="EC" id="2.3.1.74"/>
<dbReference type="EMBL" id="X53958">
    <property type="protein sequence ID" value="CAA37909.1"/>
    <property type="molecule type" value="Genomic_DNA"/>
</dbReference>
<dbReference type="PIR" id="S11486">
    <property type="entry name" value="SYSYC3"/>
</dbReference>
<dbReference type="SMR" id="P19168"/>
<dbReference type="STRING" id="3847.P19168"/>
<dbReference type="PaxDb" id="3847-GLYMA08G11530.1"/>
<dbReference type="eggNOG" id="ENOG502QRSY">
    <property type="taxonomic scope" value="Eukaryota"/>
</dbReference>
<dbReference type="InParanoid" id="P19168"/>
<dbReference type="UniPathway" id="UPA00154"/>
<dbReference type="Proteomes" id="UP000008827">
    <property type="component" value="Unplaced"/>
</dbReference>
<dbReference type="GO" id="GO:0016747">
    <property type="term" value="F:acyltransferase activity, transferring groups other than amino-acyl groups"/>
    <property type="evidence" value="ECO:0000318"/>
    <property type="project" value="GO_Central"/>
</dbReference>
<dbReference type="GO" id="GO:0016210">
    <property type="term" value="F:naringenin-chalcone synthase activity"/>
    <property type="evidence" value="ECO:0007669"/>
    <property type="project" value="UniProtKB-EC"/>
</dbReference>
<dbReference type="GO" id="GO:0009813">
    <property type="term" value="P:flavonoid biosynthetic process"/>
    <property type="evidence" value="ECO:0007669"/>
    <property type="project" value="UniProtKB-UniPathway"/>
</dbReference>
<dbReference type="GO" id="GO:0030639">
    <property type="term" value="P:polyketide biosynthetic process"/>
    <property type="evidence" value="ECO:0000318"/>
    <property type="project" value="GO_Central"/>
</dbReference>
<dbReference type="CDD" id="cd00831">
    <property type="entry name" value="CHS_like"/>
    <property type="match status" value="1"/>
</dbReference>
<dbReference type="FunFam" id="3.40.47.10:FF:000014">
    <property type="entry name" value="Chalcone synthase 1"/>
    <property type="match status" value="1"/>
</dbReference>
<dbReference type="FunFam" id="3.40.47.10:FF:000025">
    <property type="entry name" value="Chalcone synthase 2"/>
    <property type="match status" value="1"/>
</dbReference>
<dbReference type="Gene3D" id="3.40.47.10">
    <property type="match status" value="2"/>
</dbReference>
<dbReference type="InterPro" id="IPR012328">
    <property type="entry name" value="Chalcone/stilbene_synt_C"/>
</dbReference>
<dbReference type="InterPro" id="IPR001099">
    <property type="entry name" value="Chalcone/stilbene_synt_N"/>
</dbReference>
<dbReference type="InterPro" id="IPR018088">
    <property type="entry name" value="Chalcone/stilbene_synthase_AS"/>
</dbReference>
<dbReference type="InterPro" id="IPR011141">
    <property type="entry name" value="Polyketide_synthase_type-III"/>
</dbReference>
<dbReference type="InterPro" id="IPR016039">
    <property type="entry name" value="Thiolase-like"/>
</dbReference>
<dbReference type="PANTHER" id="PTHR11877:SF100">
    <property type="entry name" value="CHALCONE SYNTHASE 3"/>
    <property type="match status" value="1"/>
</dbReference>
<dbReference type="PANTHER" id="PTHR11877">
    <property type="entry name" value="HYDROXYMETHYLGLUTARYL-COA SYNTHASE"/>
    <property type="match status" value="1"/>
</dbReference>
<dbReference type="Pfam" id="PF02797">
    <property type="entry name" value="Chal_sti_synt_C"/>
    <property type="match status" value="1"/>
</dbReference>
<dbReference type="Pfam" id="PF00195">
    <property type="entry name" value="Chal_sti_synt_N"/>
    <property type="match status" value="1"/>
</dbReference>
<dbReference type="PIRSF" id="PIRSF000451">
    <property type="entry name" value="PKS_III"/>
    <property type="match status" value="1"/>
</dbReference>
<dbReference type="SUPFAM" id="SSF53901">
    <property type="entry name" value="Thiolase-like"/>
    <property type="match status" value="2"/>
</dbReference>
<dbReference type="PROSITE" id="PS00441">
    <property type="entry name" value="CHALCONE_SYNTH"/>
    <property type="match status" value="1"/>
</dbReference>
<organism>
    <name type="scientific">Glycine max</name>
    <name type="common">Soybean</name>
    <name type="synonym">Glycine hispida</name>
    <dbReference type="NCBI Taxonomy" id="3847"/>
    <lineage>
        <taxon>Eukaryota</taxon>
        <taxon>Viridiplantae</taxon>
        <taxon>Streptophyta</taxon>
        <taxon>Embryophyta</taxon>
        <taxon>Tracheophyta</taxon>
        <taxon>Spermatophyta</taxon>
        <taxon>Magnoliopsida</taxon>
        <taxon>eudicotyledons</taxon>
        <taxon>Gunneridae</taxon>
        <taxon>Pentapetalae</taxon>
        <taxon>rosids</taxon>
        <taxon>fabids</taxon>
        <taxon>Fabales</taxon>
        <taxon>Fabaceae</taxon>
        <taxon>Papilionoideae</taxon>
        <taxon>50 kb inversion clade</taxon>
        <taxon>NPAAA clade</taxon>
        <taxon>indigoferoid/millettioid clade</taxon>
        <taxon>Phaseoleae</taxon>
        <taxon>Glycine</taxon>
        <taxon>Glycine subgen. Soja</taxon>
    </lineage>
</organism>
<comment type="function">
    <text>The primary product of this enzyme is 4,2',4',6'-tetrahydroxychalcone (also termed naringenin-chalcone or chalcone) which can under specific conditions spontaneously isomerize into naringenin.</text>
</comment>
<comment type="catalytic activity">
    <reaction evidence="1">
        <text>(E)-4-coumaroyl-CoA + 3 malonyl-CoA + 3 H(+) = 2',4,4',6'-tetrahydroxychalcone + 3 CO2 + 4 CoA</text>
        <dbReference type="Rhea" id="RHEA:11128"/>
        <dbReference type="ChEBI" id="CHEBI:15378"/>
        <dbReference type="ChEBI" id="CHEBI:15413"/>
        <dbReference type="ChEBI" id="CHEBI:16526"/>
        <dbReference type="ChEBI" id="CHEBI:57287"/>
        <dbReference type="ChEBI" id="CHEBI:57384"/>
        <dbReference type="ChEBI" id="CHEBI:85008"/>
        <dbReference type="EC" id="2.3.1.74"/>
    </reaction>
</comment>
<comment type="pathway">
    <text>Secondary metabolite biosynthesis; flavonoid biosynthesis.</text>
</comment>
<comment type="similarity">
    <text evidence="2">Belongs to the thiolase-like superfamily. Chalcone/stilbene synthases family.</text>
</comment>
<proteinExistence type="inferred from homology"/>
<feature type="chain" id="PRO_0000216064" description="Chalcone synthase 3">
    <location>
        <begin position="1"/>
        <end position="388"/>
    </location>
</feature>
<feature type="active site" evidence="1">
    <location>
        <position position="164"/>
    </location>
</feature>
<gene>
    <name type="primary">CHS3</name>
</gene>
<evidence type="ECO:0000255" key="1">
    <source>
        <dbReference type="PROSITE-ProRule" id="PRU10023"/>
    </source>
</evidence>
<evidence type="ECO:0000305" key="2"/>
<sequence>MVSVEEIRNAQRAEGPATVMAIGTATPPNCVDQSTYPDYYFRITNSEHMTELKEKFKRMCDKSMIKKRYMYLNEEILKENPSVCAYMAPSLDARQDMVVVEVPKLGKEAATKAIKEWGQPKSKITHLIFCTTSGVDMPGADYQLTKLLGLRPSVKRYMMYQQGCFAGGTVLRLAKDLAENNKGARVLVVCSEITAVTFRGPTDTHLDSLVGQALFGDGAAAVIVGSDPLPVEKPLFQLVWTAQTILPDSEGAIDGHLGEVGLTFHLLKDVPGLISKNIEKALVEAFQPLGISDYNSIFWIAHPGGPAILDQVEAKLGLKPEKMEATRHVLSEYGNMSSACVLFILDQMRKKSIENGLGTTGEGLDWGVLFGFGPGLTVETVVLRSVTV</sequence>
<reference key="1">
    <citation type="journal article" date="1990" name="Nucleic Acids Res.">
        <title>The nucleotide sequence of gene 3 of the soybean chalcone synthase multigene family.</title>
        <authorList>
            <person name="Akada S."/>
            <person name="Kung S.D."/>
            <person name="Dube S.K."/>
        </authorList>
    </citation>
    <scope>NUCLEOTIDE SEQUENCE [GENOMIC DNA]</scope>
    <source>
        <strain>cv. Williams</strain>
    </source>
</reference>
<name>CHS3_SOYBN</name>
<protein>
    <recommendedName>
        <fullName>Chalcone synthase 3</fullName>
        <ecNumber>2.3.1.74</ecNumber>
    </recommendedName>
    <alternativeName>
        <fullName>Naringenin-chalcone synthase 3</fullName>
    </alternativeName>
</protein>
<accession>P19168</accession>
<keyword id="KW-0012">Acyltransferase</keyword>
<keyword id="KW-0284">Flavonoid biosynthesis</keyword>
<keyword id="KW-1185">Reference proteome</keyword>
<keyword id="KW-0808">Transferase</keyword>